<name>RR14_BRADI</name>
<keyword id="KW-0150">Chloroplast</keyword>
<keyword id="KW-0934">Plastid</keyword>
<keyword id="KW-1185">Reference proteome</keyword>
<keyword id="KW-0687">Ribonucleoprotein</keyword>
<keyword id="KW-0689">Ribosomal protein</keyword>
<keyword id="KW-0694">RNA-binding</keyword>
<keyword id="KW-0699">rRNA-binding</keyword>
<geneLocation type="chloroplast"/>
<comment type="function">
    <text evidence="1">Binds 16S rRNA, required for the assembly of 30S particles.</text>
</comment>
<comment type="subunit">
    <text evidence="1">Part of the 30S ribosomal subunit.</text>
</comment>
<comment type="subcellular location">
    <subcellularLocation>
        <location>Plastid</location>
        <location>Chloroplast</location>
    </subcellularLocation>
</comment>
<comment type="similarity">
    <text evidence="1">Belongs to the universal ribosomal protein uS14 family.</text>
</comment>
<feature type="chain" id="PRO_0000354401" description="Small ribosomal subunit protein uS14c">
    <location>
        <begin position="1"/>
        <end position="103"/>
    </location>
</feature>
<feature type="region of interest" description="Disordered" evidence="2">
    <location>
        <begin position="34"/>
        <end position="56"/>
    </location>
</feature>
<evidence type="ECO:0000255" key="1">
    <source>
        <dbReference type="HAMAP-Rule" id="MF_00537"/>
    </source>
</evidence>
<evidence type="ECO:0000256" key="2">
    <source>
        <dbReference type="SAM" id="MobiDB-lite"/>
    </source>
</evidence>
<evidence type="ECO:0000305" key="3"/>
<gene>
    <name evidence="1" type="primary">rps14</name>
</gene>
<reference key="1">
    <citation type="journal article" date="2008" name="BMC Res. Notes">
        <title>The complete chloroplast genome sequence of Brachypodium distachyon: sequence comparison and phylogenetic analysis of eight grass plastomes.</title>
        <authorList>
            <person name="Bortiri E."/>
            <person name="Coleman-Derr D."/>
            <person name="Lazo G.R."/>
            <person name="Anderson O.D."/>
            <person name="Gu Y.Q."/>
        </authorList>
    </citation>
    <scope>NUCLEOTIDE SEQUENCE [LARGE SCALE GENOMIC DNA]</scope>
    <source>
        <strain>cv. Bd21</strain>
    </source>
</reference>
<dbReference type="EMBL" id="EU325680">
    <property type="protein sequence ID" value="ACF08638.1"/>
    <property type="molecule type" value="Genomic_DNA"/>
</dbReference>
<dbReference type="RefSeq" id="YP_002000485.1">
    <property type="nucleotide sequence ID" value="NC_011032.1"/>
</dbReference>
<dbReference type="SMR" id="B3TN49"/>
<dbReference type="FunCoup" id="B3TN49">
    <property type="interactions" value="1"/>
</dbReference>
<dbReference type="STRING" id="15368.B3TN49"/>
<dbReference type="GeneID" id="6439772"/>
<dbReference type="KEGG" id="bdi:6439772"/>
<dbReference type="eggNOG" id="KOG1741">
    <property type="taxonomic scope" value="Eukaryota"/>
</dbReference>
<dbReference type="InParanoid" id="B3TN49"/>
<dbReference type="Proteomes" id="UP000008810">
    <property type="component" value="Chloroplast"/>
</dbReference>
<dbReference type="GO" id="GO:0009507">
    <property type="term" value="C:chloroplast"/>
    <property type="evidence" value="ECO:0007669"/>
    <property type="project" value="UniProtKB-SubCell"/>
</dbReference>
<dbReference type="GO" id="GO:0015935">
    <property type="term" value="C:small ribosomal subunit"/>
    <property type="evidence" value="ECO:0000318"/>
    <property type="project" value="GO_Central"/>
</dbReference>
<dbReference type="GO" id="GO:0019843">
    <property type="term" value="F:rRNA binding"/>
    <property type="evidence" value="ECO:0007669"/>
    <property type="project" value="UniProtKB-UniRule"/>
</dbReference>
<dbReference type="GO" id="GO:0003735">
    <property type="term" value="F:structural constituent of ribosome"/>
    <property type="evidence" value="ECO:0000318"/>
    <property type="project" value="GO_Central"/>
</dbReference>
<dbReference type="GO" id="GO:0006412">
    <property type="term" value="P:translation"/>
    <property type="evidence" value="ECO:0000318"/>
    <property type="project" value="GO_Central"/>
</dbReference>
<dbReference type="FunFam" id="1.10.287.1480:FF:000001">
    <property type="entry name" value="30S ribosomal protein S14"/>
    <property type="match status" value="1"/>
</dbReference>
<dbReference type="Gene3D" id="1.10.287.1480">
    <property type="match status" value="1"/>
</dbReference>
<dbReference type="HAMAP" id="MF_00537">
    <property type="entry name" value="Ribosomal_uS14_1"/>
    <property type="match status" value="1"/>
</dbReference>
<dbReference type="InterPro" id="IPR001209">
    <property type="entry name" value="Ribosomal_uS14"/>
</dbReference>
<dbReference type="InterPro" id="IPR023036">
    <property type="entry name" value="Ribosomal_uS14_bac/plastid"/>
</dbReference>
<dbReference type="InterPro" id="IPR018271">
    <property type="entry name" value="Ribosomal_uS14_CS"/>
</dbReference>
<dbReference type="NCBIfam" id="NF006477">
    <property type="entry name" value="PRK08881.1"/>
    <property type="match status" value="1"/>
</dbReference>
<dbReference type="PANTHER" id="PTHR19836">
    <property type="entry name" value="30S RIBOSOMAL PROTEIN S14"/>
    <property type="match status" value="1"/>
</dbReference>
<dbReference type="PANTHER" id="PTHR19836:SF19">
    <property type="entry name" value="SMALL RIBOSOMAL SUBUNIT PROTEIN US14M"/>
    <property type="match status" value="1"/>
</dbReference>
<dbReference type="Pfam" id="PF00253">
    <property type="entry name" value="Ribosomal_S14"/>
    <property type="match status" value="1"/>
</dbReference>
<dbReference type="SUPFAM" id="SSF57716">
    <property type="entry name" value="Glucocorticoid receptor-like (DNA-binding domain)"/>
    <property type="match status" value="1"/>
</dbReference>
<dbReference type="PROSITE" id="PS00527">
    <property type="entry name" value="RIBOSOMAL_S14"/>
    <property type="match status" value="1"/>
</dbReference>
<sequence>MAKKSLIQREKKRQKLEQKYHLIRQSLKKKIRSKVSPLSLSEKTKMREKLQSLPRNSAPTRLHRRCFLTGRPRANYRDFGLSGHVLREMVYECLLPGATRSSW</sequence>
<accession>B3TN49</accession>
<protein>
    <recommendedName>
        <fullName evidence="1">Small ribosomal subunit protein uS14c</fullName>
    </recommendedName>
    <alternativeName>
        <fullName evidence="3">30S ribosomal protein S14, chloroplastic</fullName>
    </alternativeName>
</protein>
<proteinExistence type="inferred from homology"/>
<organism>
    <name type="scientific">Brachypodium distachyon</name>
    <name type="common">Purple false brome</name>
    <name type="synonym">Trachynia distachya</name>
    <dbReference type="NCBI Taxonomy" id="15368"/>
    <lineage>
        <taxon>Eukaryota</taxon>
        <taxon>Viridiplantae</taxon>
        <taxon>Streptophyta</taxon>
        <taxon>Embryophyta</taxon>
        <taxon>Tracheophyta</taxon>
        <taxon>Spermatophyta</taxon>
        <taxon>Magnoliopsida</taxon>
        <taxon>Liliopsida</taxon>
        <taxon>Poales</taxon>
        <taxon>Poaceae</taxon>
        <taxon>BOP clade</taxon>
        <taxon>Pooideae</taxon>
        <taxon>Stipodae</taxon>
        <taxon>Brachypodieae</taxon>
        <taxon>Brachypodium</taxon>
    </lineage>
</organism>